<organism>
    <name type="scientific">Salmonella paratyphi C (strain RKS4594)</name>
    <dbReference type="NCBI Taxonomy" id="476213"/>
    <lineage>
        <taxon>Bacteria</taxon>
        <taxon>Pseudomonadati</taxon>
        <taxon>Pseudomonadota</taxon>
        <taxon>Gammaproteobacteria</taxon>
        <taxon>Enterobacterales</taxon>
        <taxon>Enterobacteriaceae</taxon>
        <taxon>Salmonella</taxon>
    </lineage>
</organism>
<accession>C0Q324</accession>
<protein>
    <recommendedName>
        <fullName evidence="1">UPF0260 protein YcgN</fullName>
    </recommendedName>
</protein>
<evidence type="ECO:0000255" key="1">
    <source>
        <dbReference type="HAMAP-Rule" id="MF_00676"/>
    </source>
</evidence>
<comment type="similarity">
    <text evidence="1">Belongs to the UPF0260 family.</text>
</comment>
<sequence length="153" mass="18010">MADTLMSDTPFWQRKTLDEMTDAEWESLCDGCGQCCLHKLMDEDTDEIYFTNVACRQLNIKTCQCRHYERRFEFEPDCIKLTRENLPDFEWLPMTCAYRLLAEGKPLPTWHPLLTGSKAAMHGERISVRHIAVKESEVRDWQDHILNKPSWAE</sequence>
<gene>
    <name evidence="1" type="primary">ycgN</name>
    <name type="ordered locus">SPC_1919</name>
</gene>
<name>YCGN_SALPC</name>
<reference key="1">
    <citation type="journal article" date="2009" name="PLoS ONE">
        <title>Salmonella paratyphi C: genetic divergence from Salmonella choleraesuis and pathogenic convergence with Salmonella typhi.</title>
        <authorList>
            <person name="Liu W.-Q."/>
            <person name="Feng Y."/>
            <person name="Wang Y."/>
            <person name="Zou Q.-H."/>
            <person name="Chen F."/>
            <person name="Guo J.-T."/>
            <person name="Peng Y.-H."/>
            <person name="Jin Y."/>
            <person name="Li Y.-G."/>
            <person name="Hu S.-N."/>
            <person name="Johnston R.N."/>
            <person name="Liu G.-R."/>
            <person name="Liu S.-L."/>
        </authorList>
    </citation>
    <scope>NUCLEOTIDE SEQUENCE [LARGE SCALE GENOMIC DNA]</scope>
    <source>
        <strain>RKS4594</strain>
    </source>
</reference>
<proteinExistence type="inferred from homology"/>
<feature type="chain" id="PRO_1000147702" description="UPF0260 protein YcgN">
    <location>
        <begin position="1"/>
        <end position="153"/>
    </location>
</feature>
<dbReference type="EMBL" id="CP000857">
    <property type="protein sequence ID" value="ACN46056.1"/>
    <property type="molecule type" value="Genomic_DNA"/>
</dbReference>
<dbReference type="SMR" id="C0Q324"/>
<dbReference type="KEGG" id="sei:SPC_1919"/>
<dbReference type="HOGENOM" id="CLU_109769_0_1_6"/>
<dbReference type="Proteomes" id="UP000001599">
    <property type="component" value="Chromosome"/>
</dbReference>
<dbReference type="HAMAP" id="MF_00676">
    <property type="entry name" value="UPF0260"/>
    <property type="match status" value="1"/>
</dbReference>
<dbReference type="InterPro" id="IPR005358">
    <property type="entry name" value="Puta_zinc/iron-chelating_dom"/>
</dbReference>
<dbReference type="InterPro" id="IPR008228">
    <property type="entry name" value="UCP006173"/>
</dbReference>
<dbReference type="NCBIfam" id="NF003498">
    <property type="entry name" value="PRK05170.1-1"/>
    <property type="match status" value="1"/>
</dbReference>
<dbReference type="NCBIfam" id="NF003501">
    <property type="entry name" value="PRK05170.1-5"/>
    <property type="match status" value="1"/>
</dbReference>
<dbReference type="NCBIfam" id="NF003503">
    <property type="entry name" value="PRK05170.2-1"/>
    <property type="match status" value="1"/>
</dbReference>
<dbReference type="NCBIfam" id="NF003507">
    <property type="entry name" value="PRK05170.2-5"/>
    <property type="match status" value="1"/>
</dbReference>
<dbReference type="PANTHER" id="PTHR37421">
    <property type="entry name" value="UPF0260 PROTEIN YCGN"/>
    <property type="match status" value="1"/>
</dbReference>
<dbReference type="PANTHER" id="PTHR37421:SF1">
    <property type="entry name" value="UPF0260 PROTEIN YCGN"/>
    <property type="match status" value="1"/>
</dbReference>
<dbReference type="Pfam" id="PF03692">
    <property type="entry name" value="CxxCxxCC"/>
    <property type="match status" value="1"/>
</dbReference>
<dbReference type="PIRSF" id="PIRSF006173">
    <property type="entry name" value="UCP006173"/>
    <property type="match status" value="1"/>
</dbReference>